<dbReference type="EMBL" id="AE016795">
    <property type="protein sequence ID" value="AAO10074.1"/>
    <property type="molecule type" value="Genomic_DNA"/>
</dbReference>
<dbReference type="RefSeq" id="WP_011079578.1">
    <property type="nucleotide sequence ID" value="NC_004459.3"/>
</dbReference>
<dbReference type="KEGG" id="vvu:VV1_1657"/>
<dbReference type="HOGENOM" id="CLU_139226_1_0_6"/>
<dbReference type="Proteomes" id="UP000002275">
    <property type="component" value="Chromosome 1"/>
</dbReference>
<dbReference type="HAMAP" id="MF_01053">
    <property type="entry name" value="UPF0231"/>
    <property type="match status" value="1"/>
</dbReference>
<dbReference type="InterPro" id="IPR008249">
    <property type="entry name" value="UPF0231"/>
</dbReference>
<dbReference type="NCBIfam" id="NF003579">
    <property type="entry name" value="PRK05248.2-4"/>
    <property type="match status" value="1"/>
</dbReference>
<dbReference type="Pfam" id="PF06062">
    <property type="entry name" value="UPF0231"/>
    <property type="match status" value="1"/>
</dbReference>
<dbReference type="PIRSF" id="PIRSF006287">
    <property type="entry name" value="UCP006287"/>
    <property type="match status" value="1"/>
</dbReference>
<evidence type="ECO:0000255" key="1">
    <source>
        <dbReference type="HAMAP-Rule" id="MF_01053"/>
    </source>
</evidence>
<sequence length="122" mass="14071">MDYEFKKNILDGHYYCHCSMDHEIVGRWVQEEIGKESTKIAQVLALIVAARSNPTEELCLNGTEISLMICGDEVTVQDNALLHSYELEAESEFELYDCESVACCGLEDFEQLIQQWQLFVRR</sequence>
<protein>
    <recommendedName>
        <fullName evidence="1">UPF0231 protein VV1_1657</fullName>
    </recommendedName>
</protein>
<comment type="similarity">
    <text evidence="1">Belongs to the UPF0231 family.</text>
</comment>
<name>Y1657_VIBVU</name>
<organism>
    <name type="scientific">Vibrio vulnificus (strain CMCP6)</name>
    <dbReference type="NCBI Taxonomy" id="216895"/>
    <lineage>
        <taxon>Bacteria</taxon>
        <taxon>Pseudomonadati</taxon>
        <taxon>Pseudomonadota</taxon>
        <taxon>Gammaproteobacteria</taxon>
        <taxon>Vibrionales</taxon>
        <taxon>Vibrionaceae</taxon>
        <taxon>Vibrio</taxon>
    </lineage>
</organism>
<proteinExistence type="inferred from homology"/>
<reference key="1">
    <citation type="submission" date="2002-12" db="EMBL/GenBank/DDBJ databases">
        <title>Complete genome sequence of Vibrio vulnificus CMCP6.</title>
        <authorList>
            <person name="Rhee J.H."/>
            <person name="Kim S.Y."/>
            <person name="Chung S.S."/>
            <person name="Kim J.J."/>
            <person name="Moon Y.H."/>
            <person name="Jeong H."/>
            <person name="Choy H.E."/>
        </authorList>
    </citation>
    <scope>NUCLEOTIDE SEQUENCE [LARGE SCALE GENOMIC DNA]</scope>
    <source>
        <strain>CMCP6</strain>
    </source>
</reference>
<feature type="chain" id="PRO_0000214661" description="UPF0231 protein VV1_1657">
    <location>
        <begin position="1"/>
        <end position="122"/>
    </location>
</feature>
<accession>Q8DBZ8</accession>
<gene>
    <name type="ordered locus">VV1_1657</name>
</gene>